<evidence type="ECO:0000255" key="1">
    <source>
        <dbReference type="HAMAP-Rule" id="MF_00735"/>
    </source>
</evidence>
<dbReference type="EC" id="2.1.1.-" evidence="1"/>
<dbReference type="EMBL" id="CP000647">
    <property type="protein sequence ID" value="ABR79060.1"/>
    <property type="molecule type" value="Genomic_DNA"/>
</dbReference>
<dbReference type="RefSeq" id="WP_002918745.1">
    <property type="nucleotide sequence ID" value="NC_009648.1"/>
</dbReference>
<dbReference type="SMR" id="A6TES6"/>
<dbReference type="STRING" id="272620.KPN_03668"/>
<dbReference type="PaxDb" id="272620-KPN_03668"/>
<dbReference type="EnsemblBacteria" id="ABR79060">
    <property type="protein sequence ID" value="ABR79060"/>
    <property type="gene ID" value="KPN_03668"/>
</dbReference>
<dbReference type="KEGG" id="kpn:KPN_03668"/>
<dbReference type="HOGENOM" id="CLU_049382_4_1_6"/>
<dbReference type="Proteomes" id="UP000000265">
    <property type="component" value="Chromosome"/>
</dbReference>
<dbReference type="GO" id="GO:0005829">
    <property type="term" value="C:cytosol"/>
    <property type="evidence" value="ECO:0007669"/>
    <property type="project" value="TreeGrafter"/>
</dbReference>
<dbReference type="GO" id="GO:0016279">
    <property type="term" value="F:protein-lysine N-methyltransferase activity"/>
    <property type="evidence" value="ECO:0007669"/>
    <property type="project" value="TreeGrafter"/>
</dbReference>
<dbReference type="GO" id="GO:0032259">
    <property type="term" value="P:methylation"/>
    <property type="evidence" value="ECO:0007669"/>
    <property type="project" value="UniProtKB-KW"/>
</dbReference>
<dbReference type="CDD" id="cd02440">
    <property type="entry name" value="AdoMet_MTases"/>
    <property type="match status" value="1"/>
</dbReference>
<dbReference type="FunFam" id="3.40.50.150:FF:000021">
    <property type="entry name" value="Ribosomal protein L11 methyltransferase"/>
    <property type="match status" value="1"/>
</dbReference>
<dbReference type="Gene3D" id="3.40.50.150">
    <property type="entry name" value="Vaccinia Virus protein VP39"/>
    <property type="match status" value="1"/>
</dbReference>
<dbReference type="HAMAP" id="MF_00735">
    <property type="entry name" value="Methyltr_PrmA"/>
    <property type="match status" value="1"/>
</dbReference>
<dbReference type="InterPro" id="IPR050078">
    <property type="entry name" value="Ribosomal_L11_MeTrfase_PrmA"/>
</dbReference>
<dbReference type="InterPro" id="IPR004498">
    <property type="entry name" value="Ribosomal_PrmA_MeTrfase"/>
</dbReference>
<dbReference type="InterPro" id="IPR029063">
    <property type="entry name" value="SAM-dependent_MTases_sf"/>
</dbReference>
<dbReference type="NCBIfam" id="TIGR00406">
    <property type="entry name" value="prmA"/>
    <property type="match status" value="1"/>
</dbReference>
<dbReference type="PANTHER" id="PTHR43648">
    <property type="entry name" value="ELECTRON TRANSFER FLAVOPROTEIN BETA SUBUNIT LYSINE METHYLTRANSFERASE"/>
    <property type="match status" value="1"/>
</dbReference>
<dbReference type="PANTHER" id="PTHR43648:SF1">
    <property type="entry name" value="ELECTRON TRANSFER FLAVOPROTEIN BETA SUBUNIT LYSINE METHYLTRANSFERASE"/>
    <property type="match status" value="1"/>
</dbReference>
<dbReference type="Pfam" id="PF06325">
    <property type="entry name" value="PrmA"/>
    <property type="match status" value="1"/>
</dbReference>
<dbReference type="PIRSF" id="PIRSF000401">
    <property type="entry name" value="RPL11_MTase"/>
    <property type="match status" value="1"/>
</dbReference>
<dbReference type="SUPFAM" id="SSF53335">
    <property type="entry name" value="S-adenosyl-L-methionine-dependent methyltransferases"/>
    <property type="match status" value="1"/>
</dbReference>
<keyword id="KW-0963">Cytoplasm</keyword>
<keyword id="KW-0489">Methyltransferase</keyword>
<keyword id="KW-0949">S-adenosyl-L-methionine</keyword>
<keyword id="KW-0808">Transferase</keyword>
<gene>
    <name evidence="1" type="primary">prmA</name>
    <name type="ordered locus">KPN78578_36360</name>
    <name type="ORF">KPN_03668</name>
</gene>
<protein>
    <recommendedName>
        <fullName evidence="1">Ribosomal protein L11 methyltransferase</fullName>
        <shortName evidence="1">L11 Mtase</shortName>
        <ecNumber evidence="1">2.1.1.-</ecNumber>
    </recommendedName>
</protein>
<sequence>MPWIQLKLNTTGANAEDLSDALMEAGSVSITFQDTHDTPVFEPLPGETRLWGDTDVIGLFDAETDMKAVVAQLEQHPLLGAGFAHKIEQLEDKDWEREWMDNFHPMRFGERLWICPSWRDVPDENAVNVMLDPGLAFGTGTHPTTSLCLQWLDGLDLNGKTVIDFGCGSGILAIAALKLGAAKAIGIDIDPQAIQASRDNAQRNGVSERLELYLPQDQPESMKADVVVANILAGPLRELAPLISVLPVSGGLLGLSGILASQAESVCEAYADLFALDPVVEKEEWCRITGRKN</sequence>
<proteinExistence type="inferred from homology"/>
<reference key="1">
    <citation type="submission" date="2006-09" db="EMBL/GenBank/DDBJ databases">
        <authorList>
            <consortium name="The Klebsiella pneumonia Genome Sequencing Project"/>
            <person name="McClelland M."/>
            <person name="Sanderson E.K."/>
            <person name="Spieth J."/>
            <person name="Clifton W.S."/>
            <person name="Latreille P."/>
            <person name="Sabo A."/>
            <person name="Pepin K."/>
            <person name="Bhonagiri V."/>
            <person name="Porwollik S."/>
            <person name="Ali J."/>
            <person name="Wilson R.K."/>
        </authorList>
    </citation>
    <scope>NUCLEOTIDE SEQUENCE [LARGE SCALE GENOMIC DNA]</scope>
    <source>
        <strain>ATCC 700721 / MGH 78578</strain>
    </source>
</reference>
<comment type="function">
    <text evidence="1">Methylates ribosomal protein L11.</text>
</comment>
<comment type="catalytic activity">
    <reaction evidence="1">
        <text>L-lysyl-[protein] + 3 S-adenosyl-L-methionine = N(6),N(6),N(6)-trimethyl-L-lysyl-[protein] + 3 S-adenosyl-L-homocysteine + 3 H(+)</text>
        <dbReference type="Rhea" id="RHEA:54192"/>
        <dbReference type="Rhea" id="RHEA-COMP:9752"/>
        <dbReference type="Rhea" id="RHEA-COMP:13826"/>
        <dbReference type="ChEBI" id="CHEBI:15378"/>
        <dbReference type="ChEBI" id="CHEBI:29969"/>
        <dbReference type="ChEBI" id="CHEBI:57856"/>
        <dbReference type="ChEBI" id="CHEBI:59789"/>
        <dbReference type="ChEBI" id="CHEBI:61961"/>
    </reaction>
</comment>
<comment type="subcellular location">
    <subcellularLocation>
        <location evidence="1">Cytoplasm</location>
    </subcellularLocation>
</comment>
<comment type="similarity">
    <text evidence="1">Belongs to the methyltransferase superfamily. PrmA family.</text>
</comment>
<feature type="chain" id="PRO_1000046035" description="Ribosomal protein L11 methyltransferase">
    <location>
        <begin position="1"/>
        <end position="293"/>
    </location>
</feature>
<feature type="binding site" evidence="1">
    <location>
        <position position="145"/>
    </location>
    <ligand>
        <name>S-adenosyl-L-methionine</name>
        <dbReference type="ChEBI" id="CHEBI:59789"/>
    </ligand>
</feature>
<feature type="binding site" evidence="1">
    <location>
        <position position="166"/>
    </location>
    <ligand>
        <name>S-adenosyl-L-methionine</name>
        <dbReference type="ChEBI" id="CHEBI:59789"/>
    </ligand>
</feature>
<feature type="binding site" evidence="1">
    <location>
        <position position="188"/>
    </location>
    <ligand>
        <name>S-adenosyl-L-methionine</name>
        <dbReference type="ChEBI" id="CHEBI:59789"/>
    </ligand>
</feature>
<feature type="binding site" evidence="1">
    <location>
        <position position="230"/>
    </location>
    <ligand>
        <name>S-adenosyl-L-methionine</name>
        <dbReference type="ChEBI" id="CHEBI:59789"/>
    </ligand>
</feature>
<organism>
    <name type="scientific">Klebsiella pneumoniae subsp. pneumoniae (strain ATCC 700721 / MGH 78578)</name>
    <dbReference type="NCBI Taxonomy" id="272620"/>
    <lineage>
        <taxon>Bacteria</taxon>
        <taxon>Pseudomonadati</taxon>
        <taxon>Pseudomonadota</taxon>
        <taxon>Gammaproteobacteria</taxon>
        <taxon>Enterobacterales</taxon>
        <taxon>Enterobacteriaceae</taxon>
        <taxon>Klebsiella/Raoultella group</taxon>
        <taxon>Klebsiella</taxon>
        <taxon>Klebsiella pneumoniae complex</taxon>
    </lineage>
</organism>
<name>PRMA_KLEP7</name>
<accession>A6TES6</accession>